<accession>Q4UWF4</accession>
<feature type="chain" id="PRO_0000451250" description="Uridine 5'-monophosphate transferase">
    <location>
        <begin position="1"/>
        <end position="536"/>
    </location>
</feature>
<feature type="repeat" description="LRR 1" evidence="1">
    <location>
        <begin position="140"/>
        <end position="164"/>
    </location>
</feature>
<feature type="repeat" description="LRR 2" evidence="1">
    <location>
        <begin position="165"/>
        <end position="189"/>
    </location>
</feature>
<feature type="repeat" description="LRR 3" evidence="1">
    <location>
        <begin position="191"/>
        <end position="211"/>
    </location>
</feature>
<feature type="repeat" description="LRR 4" evidence="1">
    <location>
        <begin position="212"/>
        <end position="234"/>
    </location>
</feature>
<feature type="repeat" description="LRR 5" evidence="1">
    <location>
        <begin position="236"/>
        <end position="257"/>
    </location>
</feature>
<feature type="repeat" description="LRR 6" evidence="1">
    <location>
        <begin position="258"/>
        <end position="282"/>
    </location>
</feature>
<feature type="domain" description="Fido" evidence="2">
    <location>
        <begin position="377"/>
        <end position="533"/>
    </location>
</feature>
<feature type="region of interest" description="Disordered" evidence="3">
    <location>
        <begin position="22"/>
        <end position="84"/>
    </location>
</feature>
<feature type="compositionally biased region" description="Polar residues" evidence="3">
    <location>
        <begin position="31"/>
        <end position="45"/>
    </location>
</feature>
<feature type="compositionally biased region" description="Basic and acidic residues" evidence="3">
    <location>
        <begin position="48"/>
        <end position="60"/>
    </location>
</feature>
<feature type="compositionally biased region" description="Polar residues" evidence="3">
    <location>
        <begin position="66"/>
        <end position="84"/>
    </location>
</feature>
<feature type="mutagenesis site" description="Lack of uridylyl transferase activity." evidence="5">
    <original>H</original>
    <variation>A</variation>
    <location>
        <position position="469"/>
    </location>
</feature>
<dbReference type="EC" id="2.7.7.-" evidence="5 8"/>
<dbReference type="EMBL" id="JX453139">
    <property type="protein sequence ID" value="AFP74845.1"/>
    <property type="molecule type" value="Genomic_DNA"/>
</dbReference>
<dbReference type="EMBL" id="CP000050">
    <property type="protein sequence ID" value="AAY48619.1"/>
    <property type="molecule type" value="Genomic_DNA"/>
</dbReference>
<dbReference type="RefSeq" id="WP_011269629.1">
    <property type="nucleotide sequence ID" value="NC_007086.1"/>
</dbReference>
<dbReference type="SMR" id="Q4UWF4"/>
<dbReference type="KEGG" id="xcb:XC_1553"/>
<dbReference type="HOGENOM" id="CLU_508005_0_0_6"/>
<dbReference type="PHI-base" id="PHI:6574"/>
<dbReference type="PHI-base" id="PHI:6575"/>
<dbReference type="Proteomes" id="UP000000420">
    <property type="component" value="Chromosome"/>
</dbReference>
<dbReference type="GO" id="GO:0005576">
    <property type="term" value="C:extracellular region"/>
    <property type="evidence" value="ECO:0007669"/>
    <property type="project" value="UniProtKB-SubCell"/>
</dbReference>
<dbReference type="GO" id="GO:0043657">
    <property type="term" value="C:host cell"/>
    <property type="evidence" value="ECO:0007669"/>
    <property type="project" value="UniProtKB-SubCell"/>
</dbReference>
<dbReference type="GO" id="GO:0020002">
    <property type="term" value="C:host cell plasma membrane"/>
    <property type="evidence" value="ECO:0007669"/>
    <property type="project" value="UniProtKB-SubCell"/>
</dbReference>
<dbReference type="GO" id="GO:0016020">
    <property type="term" value="C:membrane"/>
    <property type="evidence" value="ECO:0007669"/>
    <property type="project" value="UniProtKB-KW"/>
</dbReference>
<dbReference type="GO" id="GO:0016779">
    <property type="term" value="F:nucleotidyltransferase activity"/>
    <property type="evidence" value="ECO:0007669"/>
    <property type="project" value="UniProtKB-KW"/>
</dbReference>
<dbReference type="Gene3D" id="1.10.3290.10">
    <property type="entry name" value="Fido-like domain"/>
    <property type="match status" value="1"/>
</dbReference>
<dbReference type="Gene3D" id="3.80.10.10">
    <property type="entry name" value="Ribonuclease Inhibitor"/>
    <property type="match status" value="1"/>
</dbReference>
<dbReference type="InterPro" id="IPR003812">
    <property type="entry name" value="Fido"/>
</dbReference>
<dbReference type="InterPro" id="IPR036597">
    <property type="entry name" value="Fido-like_dom_sf"/>
</dbReference>
<dbReference type="InterPro" id="IPR003591">
    <property type="entry name" value="Leu-rich_rpt_typical-subtyp"/>
</dbReference>
<dbReference type="InterPro" id="IPR050715">
    <property type="entry name" value="LRR-SigEffector_domain"/>
</dbReference>
<dbReference type="InterPro" id="IPR032675">
    <property type="entry name" value="LRR_dom_sf"/>
</dbReference>
<dbReference type="InterPro" id="IPR053674">
    <property type="entry name" value="RLCK_Uridylyltransferase"/>
</dbReference>
<dbReference type="NCBIfam" id="NF041381">
    <property type="entry name" value="XopAC"/>
    <property type="match status" value="1"/>
</dbReference>
<dbReference type="PANTHER" id="PTHR45752:SF187">
    <property type="entry name" value="LEUCINE-RICH REPEAT AND IQ DOMAIN-CONTAINING PROTEIN 4"/>
    <property type="match status" value="1"/>
</dbReference>
<dbReference type="PANTHER" id="PTHR45752">
    <property type="entry name" value="LEUCINE-RICH REPEAT-CONTAINING"/>
    <property type="match status" value="1"/>
</dbReference>
<dbReference type="Pfam" id="PF02661">
    <property type="entry name" value="Fic"/>
    <property type="match status" value="1"/>
</dbReference>
<dbReference type="SMART" id="SM00369">
    <property type="entry name" value="LRR_TYP"/>
    <property type="match status" value="2"/>
</dbReference>
<dbReference type="SUPFAM" id="SSF140931">
    <property type="entry name" value="Fic-like"/>
    <property type="match status" value="1"/>
</dbReference>
<dbReference type="SUPFAM" id="SSF52058">
    <property type="entry name" value="L domain-like"/>
    <property type="match status" value="1"/>
</dbReference>
<dbReference type="PROSITE" id="PS51459">
    <property type="entry name" value="FIDO"/>
    <property type="match status" value="1"/>
</dbReference>
<protein>
    <recommendedName>
        <fullName evidence="10">Uridine 5'-monophosphate transferase</fullName>
        <shortName evidence="10">UMP transferase</shortName>
        <ecNumber evidence="5 8">2.7.7.-</ecNumber>
    </recommendedName>
    <alternativeName>
        <fullName evidence="12">Type III effector XopAC/AvrAC</fullName>
    </alternativeName>
    <alternativeName>
        <fullName evidence="10">Uridylyl transferase</fullName>
    </alternativeName>
</protein>
<comment type="function">
    <text evidence="4 5 6 7 8">Functions both as a virulence and an avirulence gene in Arabidopsis (PubMed:17951377, PubMed:23736288). Causes disease on the Kashmir (Kas) ecotype, but not on Columbia (Col-0) ecotype (PubMed:17951377). Acts by directly uridylylating the conserved phosphorylation sites in the activation loop of a number of host receptor-like cytoplasmic protein kinases (RLCK), including BIK1, RIPK, PBL1 and PBL2, preventing the activation of these kinases and subsequent signal transduction (PubMed:22504181, PubMed:26355215). In susceptible Arabidopsis plants, uridylylation of BIK1 inhibits the PAMP-triggered immunity (PTI) signaling cascade and thereby promotes bacterial virulence (PubMed:22504181). It also inhibits RPM1-dependent effector-triggered immunity (ETI) in mesophyll tissues by targeting RIPK (PubMed:22504181). In contrast, in the resistant ecotype Col-0, xopAC is a major avirulence gene (PubMed:23951354, PubMed:26355215). Uridylylation of PBL2 triggers the PBL2-RKS1 interaction and thus the assembly of the PBL2-RKS1-ZAR1 complex, which, in turn, activates effector-triggered immunity (ETI) against X.campestris (PubMed:26355215).</text>
</comment>
<comment type="catalytic activity">
    <reaction evidence="5 8">
        <text>L-seryl-[protein] + UTP = O-(5'-uridylyl)-L-seryl-[protein] + diphosphate</text>
        <dbReference type="Rhea" id="RHEA:64604"/>
        <dbReference type="Rhea" id="RHEA-COMP:9863"/>
        <dbReference type="Rhea" id="RHEA-COMP:16635"/>
        <dbReference type="ChEBI" id="CHEBI:29999"/>
        <dbReference type="ChEBI" id="CHEBI:33019"/>
        <dbReference type="ChEBI" id="CHEBI:46398"/>
        <dbReference type="ChEBI" id="CHEBI:156051"/>
    </reaction>
</comment>
<comment type="catalytic activity">
    <reaction evidence="5 8">
        <text>L-threonyl-[protein] + UTP = uridylyl-L-threonyl-[protein] + diphosphate</text>
        <dbReference type="Rhea" id="RHEA:64608"/>
        <dbReference type="Rhea" id="RHEA-COMP:11060"/>
        <dbReference type="Rhea" id="RHEA-COMP:16636"/>
        <dbReference type="ChEBI" id="CHEBI:30013"/>
        <dbReference type="ChEBI" id="CHEBI:33019"/>
        <dbReference type="ChEBI" id="CHEBI:46398"/>
        <dbReference type="ChEBI" id="CHEBI:156052"/>
    </reaction>
</comment>
<comment type="subunit">
    <text evidence="7">Interacts with several members of the Arabidopsis RLCK VIIa subfamily.</text>
</comment>
<comment type="subcellular location">
    <subcellularLocation>
        <location evidence="4">Secreted</location>
    </subcellularLocation>
    <subcellularLocation>
        <location evidence="4">Host cell</location>
    </subcellularLocation>
    <subcellularLocation>
        <location evidence="7">Host cell membrane</location>
    </subcellularLocation>
    <text evidence="7 13">Secreted via the type III secretion system (T3SS) (Probable). Localization to the host plasma membrane requires the LRR domain (PubMed:23951354).</text>
</comment>
<comment type="induction">
    <text evidence="4">Transcriptionally regulated by HrpG and HrpX.</text>
</comment>
<comment type="domain">
    <text evidence="7">The LRR domain, the Fic/Fido domain and the uridylylation activity are required for avirulence function on Col-0.</text>
</comment>
<comment type="disruption phenotype">
    <text evidence="4 6 7">Mutant becomes virulent on Col-0 plants (PubMed:17951377, PubMed:23736288, PubMed:23951354). Mutant still induces disease on the Kashmir ecotype (PubMed:17951377, PubMed:23951354).</text>
</comment>
<comment type="similarity">
    <text evidence="12">In the C-terminal section; belongs to the fic family.</text>
</comment>
<evidence type="ECO:0000255" key="1"/>
<evidence type="ECO:0000255" key="2">
    <source>
        <dbReference type="PROSITE-ProRule" id="PRU00791"/>
    </source>
</evidence>
<evidence type="ECO:0000256" key="3">
    <source>
        <dbReference type="SAM" id="MobiDB-lite"/>
    </source>
</evidence>
<evidence type="ECO:0000269" key="4">
    <source>
    </source>
</evidence>
<evidence type="ECO:0000269" key="5">
    <source>
    </source>
</evidence>
<evidence type="ECO:0000269" key="6">
    <source>
    </source>
</evidence>
<evidence type="ECO:0000269" key="7">
    <source>
    </source>
</evidence>
<evidence type="ECO:0000269" key="8">
    <source>
    </source>
</evidence>
<evidence type="ECO:0000303" key="9">
    <source>
    </source>
</evidence>
<evidence type="ECO:0000303" key="10">
    <source>
    </source>
</evidence>
<evidence type="ECO:0000303" key="11">
    <source>
    </source>
</evidence>
<evidence type="ECO:0000305" key="12"/>
<evidence type="ECO:0000305" key="13">
    <source>
    </source>
</evidence>
<evidence type="ECO:0000312" key="14">
    <source>
        <dbReference type="EMBL" id="AAY48619.1"/>
    </source>
</evidence>
<keyword id="KW-1032">Host cell membrane</keyword>
<keyword id="KW-1043">Host membrane</keyword>
<keyword id="KW-0433">Leucine-rich repeat</keyword>
<keyword id="KW-0472">Membrane</keyword>
<keyword id="KW-0548">Nucleotidyltransferase</keyword>
<keyword id="KW-0677">Repeat</keyword>
<keyword id="KW-0964">Secreted</keyword>
<keyword id="KW-0808">Transferase</keyword>
<keyword id="KW-0843">Virulence</keyword>
<proteinExistence type="evidence at protein level"/>
<reference key="1">
    <citation type="journal article" date="2013" name="MBio">
        <title>Natural genetic variation of Xanthomonas campestris pv. campestris pathogenicity on Arabidopsis revealed by association and reverse genetics.</title>
        <authorList>
            <person name="Guy E."/>
            <person name="Genissel A."/>
            <person name="Hajri A."/>
            <person name="Chabannes M."/>
            <person name="David P."/>
            <person name="Carrere S."/>
            <person name="Lautier M."/>
            <person name="Roux B."/>
            <person name="Boureau T."/>
            <person name="Arlat M."/>
            <person name="Poussier S."/>
            <person name="Noel L.D."/>
        </authorList>
    </citation>
    <scope>NUCLEOTIDE SEQUENCE [GENOMIC DNA]</scope>
    <scope>FUNCTION</scope>
    <scope>DISRUPTION PHENOTYPE</scope>
    <source>
        <strain>8004</strain>
    </source>
</reference>
<reference key="2">
    <citation type="journal article" date="2005" name="Genome Res.">
        <title>Comparative and functional genomic analyses of the pathogenicity of phytopathogen Xanthomonas campestris pv. campestris.</title>
        <authorList>
            <person name="Qian W."/>
            <person name="Jia Y."/>
            <person name="Ren S.-X."/>
            <person name="He Y.-Q."/>
            <person name="Feng J.-X."/>
            <person name="Lu L.-F."/>
            <person name="Sun Q."/>
            <person name="Ying G."/>
            <person name="Tang D.-J."/>
            <person name="Tang H."/>
            <person name="Wu W."/>
            <person name="Hao P."/>
            <person name="Wang L."/>
            <person name="Jiang B.-L."/>
            <person name="Zeng S."/>
            <person name="Gu W.-Y."/>
            <person name="Lu G."/>
            <person name="Rong L."/>
            <person name="Tian Y."/>
            <person name="Yao Z."/>
            <person name="Fu G."/>
            <person name="Chen B."/>
            <person name="Fang R."/>
            <person name="Qiang B."/>
            <person name="Chen Z."/>
            <person name="Zhao G.-P."/>
            <person name="Tang J.-L."/>
            <person name="He C."/>
        </authorList>
    </citation>
    <scope>NUCLEOTIDE SEQUENCE [LARGE SCALE GENOMIC DNA]</scope>
    <source>
        <strain>8004</strain>
    </source>
</reference>
<reference key="3">
    <citation type="journal article" date="2008" name="J. Bacteriol.">
        <title>AvrAC(Xcc8004), a type III effector with a leucine-rich repeat domain from Xanthomonas campestris pathovar campestris confers avirulence in vascular tissues of Arabidopsis thaliana ecotype Col-0.</title>
        <authorList>
            <person name="Xu R.Q."/>
            <person name="Blanvillain S."/>
            <person name="Feng J.X."/>
            <person name="Jiang B.L."/>
            <person name="Li X.Z."/>
            <person name="Wei H.Y."/>
            <person name="Kroj T."/>
            <person name="Lauber E."/>
            <person name="Roby D."/>
            <person name="Chen B."/>
            <person name="He Y.Q."/>
            <person name="Lu G.T."/>
            <person name="Tang D.J."/>
            <person name="Vasse J."/>
            <person name="Arlat M."/>
            <person name="Tang J.L."/>
        </authorList>
    </citation>
    <scope>FUNCTION AS BOTH A VIRULENCE AND AN AVIRULENCE GENE</scope>
    <scope>SUBCELLULAR LOCATION</scope>
    <scope>INDUCTION</scope>
    <scope>DISRUPTION PHENOTYPE</scope>
    <source>
        <strain>8004</strain>
    </source>
</reference>
<reference key="4">
    <citation type="journal article" date="2012" name="Nature">
        <title>A Xanthomonas uridine 5'-monophosphate transferase inhibits plant immune kinases.</title>
        <authorList>
            <person name="Feng F."/>
            <person name="Yang F."/>
            <person name="Rong W."/>
            <person name="Wu X."/>
            <person name="Zhang J."/>
            <person name="Chen S."/>
            <person name="He C."/>
            <person name="Zhou J.M."/>
        </authorList>
    </citation>
    <scope>FUNCTION</scope>
    <scope>CATALYTIC ACTIVITY</scope>
    <scope>MUTAGENESIS OF HIS-469</scope>
</reference>
<reference key="5">
    <citation type="journal article" date="2013" name="PLoS ONE">
        <title>xopAC-triggered immunity against Xanthomonas depends on Arabidopsis receptor-like cytoplasmic kinase genes PBL2 and RIPK.</title>
        <authorList>
            <person name="Guy E."/>
            <person name="Lautier M."/>
            <person name="Chabannes M."/>
            <person name="Roux B."/>
            <person name="Lauber E."/>
            <person name="Arlat M."/>
            <person name="Noel L.D."/>
        </authorList>
    </citation>
    <scope>FUNCTION</scope>
    <scope>INTERACTION WITH RLCK</scope>
    <scope>SUBCELLULAR LOCATION</scope>
    <scope>DOMAIN</scope>
    <scope>DISRUPTION PHENOTYPE</scope>
</reference>
<reference key="6">
    <citation type="journal article" date="2015" name="Cell Host Microbe">
        <title>The decoy substrate of a pathogen effector and a pseudokinase specify pathogen-induced modified-self recognition and immunity in plants.</title>
        <authorList>
            <person name="Wang G."/>
            <person name="Roux B."/>
            <person name="Feng F."/>
            <person name="Guy E."/>
            <person name="Li L."/>
            <person name="Li N."/>
            <person name="Zhang X."/>
            <person name="Lautier M."/>
            <person name="Jardinaud M.-F."/>
            <person name="Chabannes M."/>
            <person name="Arlat M."/>
            <person name="Chen S."/>
            <person name="He C."/>
            <person name="Noel L.D."/>
            <person name="Zhou J.-M."/>
        </authorList>
    </citation>
    <scope>FUNCTION</scope>
    <scope>CATALYTIC ACTIVITY</scope>
</reference>
<name>XOPAC_XANC8</name>
<sequence length="536" mass="59041">MDKNLNLWDMSTFIQQYGALTADHPTHTPEDSPQTVPSPRSSSAHSPEIQELRSLQETRPARLGARSQSRSSKHGLQQCSSSPSDESFRLHAELAAWCERVETKPSLLAKLGCCAAPPVVGDHREQRREAMERIMRCLDAGQAGTQLTLRDLNLSQLPPGLHRLAHLRDLDVADNVNLTRLPEDLSLCKHLERINADGCSIAALPSKIGALKNLSEISLAFNELRTLPDSIGQCSSLTTIVVPGCKINKLPASLANLTQLKKLDVAANIELSELSPHMNLDDVAVHSTQTRLGLMHRIFKAPTFDPETRQRLSYQASALRDRWAALSHHLSPQARARVDQMREGASTTLSSQDHKASTAWKTATEKVSSWAEEGAPITLDRIFKLNQLLLPEGDDDNDPIGGQLRKVGIQAAPSNTWTECRYPPPETLKDEMAKFSGWLEHSEQQAHARDALGHIEFAAQLHQRLVSLHPFDDANGRTARLAMDWALQRHGLPPAPPVGEASRLPASFLGGKRVSPEKVVLETLEGIATVMNQVHQ</sequence>
<gene>
    <name evidence="11" type="primary">xopAC</name>
    <name evidence="9" type="synonym">AvrAC</name>
    <name evidence="14" type="ordered locus">XC_1553</name>
</gene>
<organism>
    <name type="scientific">Xanthomonas campestris pv. campestris (strain 8004)</name>
    <dbReference type="NCBI Taxonomy" id="314565"/>
    <lineage>
        <taxon>Bacteria</taxon>
        <taxon>Pseudomonadati</taxon>
        <taxon>Pseudomonadota</taxon>
        <taxon>Gammaproteobacteria</taxon>
        <taxon>Lysobacterales</taxon>
        <taxon>Lysobacteraceae</taxon>
        <taxon>Xanthomonas</taxon>
    </lineage>
</organism>